<gene>
    <name evidence="1" type="primary">rpsB</name>
    <name type="ordered locus">DSY2546</name>
</gene>
<dbReference type="EMBL" id="AP008230">
    <property type="protein sequence ID" value="BAE84335.1"/>
    <property type="molecule type" value="Genomic_DNA"/>
</dbReference>
<dbReference type="RefSeq" id="WP_011460417.1">
    <property type="nucleotide sequence ID" value="NC_007907.1"/>
</dbReference>
<dbReference type="SMR" id="Q24UF7"/>
<dbReference type="STRING" id="138119.DSY2546"/>
<dbReference type="KEGG" id="dsy:DSY2546"/>
<dbReference type="eggNOG" id="COG0052">
    <property type="taxonomic scope" value="Bacteria"/>
</dbReference>
<dbReference type="HOGENOM" id="CLU_040318_1_2_9"/>
<dbReference type="Proteomes" id="UP000001946">
    <property type="component" value="Chromosome"/>
</dbReference>
<dbReference type="GO" id="GO:0022627">
    <property type="term" value="C:cytosolic small ribosomal subunit"/>
    <property type="evidence" value="ECO:0007669"/>
    <property type="project" value="TreeGrafter"/>
</dbReference>
<dbReference type="GO" id="GO:0003735">
    <property type="term" value="F:structural constituent of ribosome"/>
    <property type="evidence" value="ECO:0007669"/>
    <property type="project" value="InterPro"/>
</dbReference>
<dbReference type="GO" id="GO:0006412">
    <property type="term" value="P:translation"/>
    <property type="evidence" value="ECO:0007669"/>
    <property type="project" value="UniProtKB-UniRule"/>
</dbReference>
<dbReference type="CDD" id="cd01425">
    <property type="entry name" value="RPS2"/>
    <property type="match status" value="1"/>
</dbReference>
<dbReference type="FunFam" id="1.10.287.610:FF:000001">
    <property type="entry name" value="30S ribosomal protein S2"/>
    <property type="match status" value="1"/>
</dbReference>
<dbReference type="Gene3D" id="3.40.50.10490">
    <property type="entry name" value="Glucose-6-phosphate isomerase like protein, domain 1"/>
    <property type="match status" value="1"/>
</dbReference>
<dbReference type="Gene3D" id="1.10.287.610">
    <property type="entry name" value="Helix hairpin bin"/>
    <property type="match status" value="1"/>
</dbReference>
<dbReference type="HAMAP" id="MF_00291_B">
    <property type="entry name" value="Ribosomal_uS2_B"/>
    <property type="match status" value="1"/>
</dbReference>
<dbReference type="InterPro" id="IPR001865">
    <property type="entry name" value="Ribosomal_uS2"/>
</dbReference>
<dbReference type="InterPro" id="IPR005706">
    <property type="entry name" value="Ribosomal_uS2_bac/mit/plastid"/>
</dbReference>
<dbReference type="InterPro" id="IPR018130">
    <property type="entry name" value="Ribosomal_uS2_CS"/>
</dbReference>
<dbReference type="InterPro" id="IPR023591">
    <property type="entry name" value="Ribosomal_uS2_flav_dom_sf"/>
</dbReference>
<dbReference type="NCBIfam" id="TIGR01011">
    <property type="entry name" value="rpsB_bact"/>
    <property type="match status" value="1"/>
</dbReference>
<dbReference type="PANTHER" id="PTHR12534">
    <property type="entry name" value="30S RIBOSOMAL PROTEIN S2 PROKARYOTIC AND ORGANELLAR"/>
    <property type="match status" value="1"/>
</dbReference>
<dbReference type="PANTHER" id="PTHR12534:SF0">
    <property type="entry name" value="SMALL RIBOSOMAL SUBUNIT PROTEIN US2M"/>
    <property type="match status" value="1"/>
</dbReference>
<dbReference type="Pfam" id="PF00318">
    <property type="entry name" value="Ribosomal_S2"/>
    <property type="match status" value="1"/>
</dbReference>
<dbReference type="PRINTS" id="PR00395">
    <property type="entry name" value="RIBOSOMALS2"/>
</dbReference>
<dbReference type="SUPFAM" id="SSF52313">
    <property type="entry name" value="Ribosomal protein S2"/>
    <property type="match status" value="1"/>
</dbReference>
<dbReference type="PROSITE" id="PS00962">
    <property type="entry name" value="RIBOSOMAL_S2_1"/>
    <property type="match status" value="1"/>
</dbReference>
<dbReference type="PROSITE" id="PS00963">
    <property type="entry name" value="RIBOSOMAL_S2_2"/>
    <property type="match status" value="1"/>
</dbReference>
<name>RS2_DESHY</name>
<sequence>MAVISMKQLLEAGVHFGHQTRRWNPKMARYIFTERNGIYIIDLQKTVRKVEEAYNYVRNLAADGGTVLFVGTKKQAQESVKEEAERCGMYYVNERWLGGMMTNFQTIQKRVSRLRELEKMEAEGVFEVLPKKEVAALRHEMEKLERFLGGIKSMKKLPDALFVVDPRKERIAVAEARRLNIPIVGIVDTNCDPDEIDVVIPANDDAIRAVKLLTGRIADAIIEGQQGSDEAEEAEEAAEEVVAE</sequence>
<evidence type="ECO:0000255" key="1">
    <source>
        <dbReference type="HAMAP-Rule" id="MF_00291"/>
    </source>
</evidence>
<evidence type="ECO:0000256" key="2">
    <source>
        <dbReference type="SAM" id="MobiDB-lite"/>
    </source>
</evidence>
<evidence type="ECO:0000305" key="3"/>
<accession>Q24UF7</accession>
<protein>
    <recommendedName>
        <fullName evidence="1">Small ribosomal subunit protein uS2</fullName>
    </recommendedName>
    <alternativeName>
        <fullName evidence="3">30S ribosomal protein S2</fullName>
    </alternativeName>
</protein>
<reference key="1">
    <citation type="journal article" date="2006" name="J. Bacteriol.">
        <title>Complete genome sequence of the dehalorespiring bacterium Desulfitobacterium hafniense Y51 and comparison with Dehalococcoides ethenogenes 195.</title>
        <authorList>
            <person name="Nonaka H."/>
            <person name="Keresztes G."/>
            <person name="Shinoda Y."/>
            <person name="Ikenaga Y."/>
            <person name="Abe M."/>
            <person name="Naito K."/>
            <person name="Inatomi K."/>
            <person name="Furukawa K."/>
            <person name="Inui M."/>
            <person name="Yukawa H."/>
        </authorList>
    </citation>
    <scope>NUCLEOTIDE SEQUENCE [LARGE SCALE GENOMIC DNA]</scope>
    <source>
        <strain>Y51</strain>
    </source>
</reference>
<proteinExistence type="inferred from homology"/>
<organism>
    <name type="scientific">Desulfitobacterium hafniense (strain Y51)</name>
    <dbReference type="NCBI Taxonomy" id="138119"/>
    <lineage>
        <taxon>Bacteria</taxon>
        <taxon>Bacillati</taxon>
        <taxon>Bacillota</taxon>
        <taxon>Clostridia</taxon>
        <taxon>Eubacteriales</taxon>
        <taxon>Desulfitobacteriaceae</taxon>
        <taxon>Desulfitobacterium</taxon>
    </lineage>
</organism>
<keyword id="KW-1185">Reference proteome</keyword>
<keyword id="KW-0687">Ribonucleoprotein</keyword>
<keyword id="KW-0689">Ribosomal protein</keyword>
<feature type="chain" id="PRO_1000003950" description="Small ribosomal subunit protein uS2">
    <location>
        <begin position="1"/>
        <end position="244"/>
    </location>
</feature>
<feature type="region of interest" description="Disordered" evidence="2">
    <location>
        <begin position="224"/>
        <end position="244"/>
    </location>
</feature>
<feature type="compositionally biased region" description="Acidic residues" evidence="2">
    <location>
        <begin position="229"/>
        <end position="244"/>
    </location>
</feature>
<comment type="similarity">
    <text evidence="1">Belongs to the universal ribosomal protein uS2 family.</text>
</comment>